<gene>
    <name type="ordered locus">Bcen2424_6479</name>
</gene>
<organism>
    <name type="scientific">Burkholderia cenocepacia (strain HI2424)</name>
    <dbReference type="NCBI Taxonomy" id="331272"/>
    <lineage>
        <taxon>Bacteria</taxon>
        <taxon>Pseudomonadati</taxon>
        <taxon>Pseudomonadota</taxon>
        <taxon>Betaproteobacteria</taxon>
        <taxon>Burkholderiales</taxon>
        <taxon>Burkholderiaceae</taxon>
        <taxon>Burkholderia</taxon>
        <taxon>Burkholderia cepacia complex</taxon>
    </lineage>
</organism>
<name>Y6479_BURCH</name>
<dbReference type="EMBL" id="CP000460">
    <property type="protein sequence ID" value="ABK13209.1"/>
    <property type="molecule type" value="Genomic_DNA"/>
</dbReference>
<dbReference type="RefSeq" id="WP_006767422.1">
    <property type="nucleotide sequence ID" value="NC_008544.1"/>
</dbReference>
<dbReference type="KEGG" id="bch:Bcen2424_6479"/>
<dbReference type="HOGENOM" id="CLU_187346_0_1_4"/>
<dbReference type="GO" id="GO:0005886">
    <property type="term" value="C:plasma membrane"/>
    <property type="evidence" value="ECO:0007669"/>
    <property type="project" value="UniProtKB-SubCell"/>
</dbReference>
<dbReference type="HAMAP" id="MF_01361">
    <property type="entry name" value="UPF0391"/>
    <property type="match status" value="1"/>
</dbReference>
<dbReference type="InterPro" id="IPR009760">
    <property type="entry name" value="DUF1328"/>
</dbReference>
<dbReference type="NCBIfam" id="NF010226">
    <property type="entry name" value="PRK13682.1-1"/>
    <property type="match status" value="1"/>
</dbReference>
<dbReference type="NCBIfam" id="NF010229">
    <property type="entry name" value="PRK13682.1-4"/>
    <property type="match status" value="1"/>
</dbReference>
<dbReference type="Pfam" id="PF07043">
    <property type="entry name" value="DUF1328"/>
    <property type="match status" value="1"/>
</dbReference>
<dbReference type="PIRSF" id="PIRSF036466">
    <property type="entry name" value="UCP036466"/>
    <property type="match status" value="1"/>
</dbReference>
<comment type="subcellular location">
    <subcellularLocation>
        <location evidence="1">Cell membrane</location>
        <topology evidence="1">Multi-pass membrane protein</topology>
    </subcellularLocation>
</comment>
<comment type="similarity">
    <text evidence="1">Belongs to the UPF0391 family.</text>
</comment>
<sequence length="53" mass="5776">MLRYAIIFFIIAIIAAVFGFGGIAAGAAEIAKILFYIFVVIFLVTLLLGVVRR</sequence>
<evidence type="ECO:0000255" key="1">
    <source>
        <dbReference type="HAMAP-Rule" id="MF_01361"/>
    </source>
</evidence>
<keyword id="KW-1003">Cell membrane</keyword>
<keyword id="KW-0472">Membrane</keyword>
<keyword id="KW-0812">Transmembrane</keyword>
<keyword id="KW-1133">Transmembrane helix</keyword>
<protein>
    <recommendedName>
        <fullName evidence="1">UPF0391 membrane protein Bcen2424_6479</fullName>
    </recommendedName>
</protein>
<accession>A0KDE6</accession>
<proteinExistence type="inferred from homology"/>
<feature type="chain" id="PRO_5000165218" description="UPF0391 membrane protein Bcen2424_6479">
    <location>
        <begin position="1"/>
        <end position="53"/>
    </location>
</feature>
<feature type="transmembrane region" description="Helical" evidence="1">
    <location>
        <begin position="5"/>
        <end position="25"/>
    </location>
</feature>
<feature type="transmembrane region" description="Helical" evidence="1">
    <location>
        <begin position="30"/>
        <end position="50"/>
    </location>
</feature>
<reference key="1">
    <citation type="submission" date="2006-08" db="EMBL/GenBank/DDBJ databases">
        <title>Complete sequence of chromosome 3 of Burkholderia cenocepacia HI2424.</title>
        <authorList>
            <person name="Copeland A."/>
            <person name="Lucas S."/>
            <person name="Lapidus A."/>
            <person name="Barry K."/>
            <person name="Detter J.C."/>
            <person name="Glavina del Rio T."/>
            <person name="Hammon N."/>
            <person name="Israni S."/>
            <person name="Pitluck S."/>
            <person name="Chain P."/>
            <person name="Malfatti S."/>
            <person name="Shin M."/>
            <person name="Vergez L."/>
            <person name="Schmutz J."/>
            <person name="Larimer F."/>
            <person name="Land M."/>
            <person name="Hauser L."/>
            <person name="Kyrpides N."/>
            <person name="Kim E."/>
            <person name="LiPuma J.J."/>
            <person name="Gonzalez C.F."/>
            <person name="Konstantinidis K."/>
            <person name="Tiedje J.M."/>
            <person name="Richardson P."/>
        </authorList>
    </citation>
    <scope>NUCLEOTIDE SEQUENCE [LARGE SCALE GENOMIC DNA]</scope>
    <source>
        <strain>HI2424</strain>
    </source>
</reference>